<reference key="1">
    <citation type="journal article" date="2005" name="Genome Res.">
        <title>Coping with cold: the genome of the versatile marine Antarctica bacterium Pseudoalteromonas haloplanktis TAC125.</title>
        <authorList>
            <person name="Medigue C."/>
            <person name="Krin E."/>
            <person name="Pascal G."/>
            <person name="Barbe V."/>
            <person name="Bernsel A."/>
            <person name="Bertin P.N."/>
            <person name="Cheung F."/>
            <person name="Cruveiller S."/>
            <person name="D'Amico S."/>
            <person name="Duilio A."/>
            <person name="Fang G."/>
            <person name="Feller G."/>
            <person name="Ho C."/>
            <person name="Mangenot S."/>
            <person name="Marino G."/>
            <person name="Nilsson J."/>
            <person name="Parrilli E."/>
            <person name="Rocha E.P.C."/>
            <person name="Rouy Z."/>
            <person name="Sekowska A."/>
            <person name="Tutino M.L."/>
            <person name="Vallenet D."/>
            <person name="von Heijne G."/>
            <person name="Danchin A."/>
        </authorList>
    </citation>
    <scope>NUCLEOTIDE SEQUENCE [LARGE SCALE GENOMIC DNA]</scope>
    <source>
        <strain>TAC 125</strain>
    </source>
</reference>
<proteinExistence type="inferred from homology"/>
<keyword id="KW-0001">2Fe-2S</keyword>
<keyword id="KW-0963">Cytoplasm</keyword>
<keyword id="KW-0408">Iron</keyword>
<keyword id="KW-0411">Iron-sulfur</keyword>
<keyword id="KW-0479">Metal-binding</keyword>
<keyword id="KW-0663">Pyridoxal phosphate</keyword>
<keyword id="KW-1185">Reference proteome</keyword>
<keyword id="KW-0808">Transferase</keyword>
<dbReference type="EC" id="2.8.1.7" evidence="1"/>
<dbReference type="EMBL" id="CR954246">
    <property type="protein sequence ID" value="CAI87719.1"/>
    <property type="molecule type" value="Genomic_DNA"/>
</dbReference>
<dbReference type="SMR" id="Q3IFI3"/>
<dbReference type="STRING" id="326442.PSHAa2671"/>
<dbReference type="KEGG" id="pha:PSHAa2671"/>
<dbReference type="eggNOG" id="COG1104">
    <property type="taxonomic scope" value="Bacteria"/>
</dbReference>
<dbReference type="HOGENOM" id="CLU_003433_0_2_6"/>
<dbReference type="BioCyc" id="PHAL326442:PSHA_RS13140-MONOMER"/>
<dbReference type="UniPathway" id="UPA00266"/>
<dbReference type="Proteomes" id="UP000006843">
    <property type="component" value="Chromosome I"/>
</dbReference>
<dbReference type="GO" id="GO:1990221">
    <property type="term" value="C:L-cysteine desulfurase complex"/>
    <property type="evidence" value="ECO:0007669"/>
    <property type="project" value="UniProtKB-ARBA"/>
</dbReference>
<dbReference type="GO" id="GO:0051537">
    <property type="term" value="F:2 iron, 2 sulfur cluster binding"/>
    <property type="evidence" value="ECO:0007669"/>
    <property type="project" value="UniProtKB-UniRule"/>
</dbReference>
<dbReference type="GO" id="GO:0031071">
    <property type="term" value="F:cysteine desulfurase activity"/>
    <property type="evidence" value="ECO:0007669"/>
    <property type="project" value="UniProtKB-UniRule"/>
</dbReference>
<dbReference type="GO" id="GO:0046872">
    <property type="term" value="F:metal ion binding"/>
    <property type="evidence" value="ECO:0007669"/>
    <property type="project" value="UniProtKB-KW"/>
</dbReference>
<dbReference type="GO" id="GO:0030170">
    <property type="term" value="F:pyridoxal phosphate binding"/>
    <property type="evidence" value="ECO:0007669"/>
    <property type="project" value="UniProtKB-UniRule"/>
</dbReference>
<dbReference type="GO" id="GO:0044571">
    <property type="term" value="P:[2Fe-2S] cluster assembly"/>
    <property type="evidence" value="ECO:0007669"/>
    <property type="project" value="UniProtKB-UniRule"/>
</dbReference>
<dbReference type="FunFam" id="3.40.640.10:FF:000003">
    <property type="entry name" value="Cysteine desulfurase IscS"/>
    <property type="match status" value="1"/>
</dbReference>
<dbReference type="FunFam" id="3.90.1150.10:FF:000002">
    <property type="entry name" value="Cysteine desulfurase IscS"/>
    <property type="match status" value="1"/>
</dbReference>
<dbReference type="Gene3D" id="3.90.1150.10">
    <property type="entry name" value="Aspartate Aminotransferase, domain 1"/>
    <property type="match status" value="1"/>
</dbReference>
<dbReference type="Gene3D" id="3.40.640.10">
    <property type="entry name" value="Type I PLP-dependent aspartate aminotransferase-like (Major domain)"/>
    <property type="match status" value="1"/>
</dbReference>
<dbReference type="HAMAP" id="MF_00331">
    <property type="entry name" value="Cys_desulf_IscS"/>
    <property type="match status" value="1"/>
</dbReference>
<dbReference type="InterPro" id="IPR000192">
    <property type="entry name" value="Aminotrans_V_dom"/>
</dbReference>
<dbReference type="InterPro" id="IPR020578">
    <property type="entry name" value="Aminotrans_V_PyrdxlP_BS"/>
</dbReference>
<dbReference type="InterPro" id="IPR010240">
    <property type="entry name" value="Cys_deSase_IscS"/>
</dbReference>
<dbReference type="InterPro" id="IPR016454">
    <property type="entry name" value="Cysteine_dSase"/>
</dbReference>
<dbReference type="InterPro" id="IPR015424">
    <property type="entry name" value="PyrdxlP-dep_Trfase"/>
</dbReference>
<dbReference type="InterPro" id="IPR015421">
    <property type="entry name" value="PyrdxlP-dep_Trfase_major"/>
</dbReference>
<dbReference type="InterPro" id="IPR015422">
    <property type="entry name" value="PyrdxlP-dep_Trfase_small"/>
</dbReference>
<dbReference type="NCBIfam" id="TIGR02006">
    <property type="entry name" value="IscS"/>
    <property type="match status" value="1"/>
</dbReference>
<dbReference type="NCBIfam" id="NF002806">
    <property type="entry name" value="PRK02948.1"/>
    <property type="match status" value="1"/>
</dbReference>
<dbReference type="NCBIfam" id="NF010611">
    <property type="entry name" value="PRK14012.1"/>
    <property type="match status" value="1"/>
</dbReference>
<dbReference type="PANTHER" id="PTHR11601:SF34">
    <property type="entry name" value="CYSTEINE DESULFURASE"/>
    <property type="match status" value="1"/>
</dbReference>
<dbReference type="PANTHER" id="PTHR11601">
    <property type="entry name" value="CYSTEINE DESULFURYLASE FAMILY MEMBER"/>
    <property type="match status" value="1"/>
</dbReference>
<dbReference type="Pfam" id="PF00266">
    <property type="entry name" value="Aminotran_5"/>
    <property type="match status" value="1"/>
</dbReference>
<dbReference type="PIRSF" id="PIRSF005572">
    <property type="entry name" value="NifS"/>
    <property type="match status" value="1"/>
</dbReference>
<dbReference type="SUPFAM" id="SSF53383">
    <property type="entry name" value="PLP-dependent transferases"/>
    <property type="match status" value="1"/>
</dbReference>
<dbReference type="PROSITE" id="PS00595">
    <property type="entry name" value="AA_TRANSFER_CLASS_5"/>
    <property type="match status" value="1"/>
</dbReference>
<sequence>MKLPIYLDYAATTPVDERVAKEMMQCLTMDGNFGNPASRSHRFGWQAEEVVDQARTDVADLINADPREIVFTSGATESNNLAIKGAAQFYKKKGKHIITAKTEHKAVIDTCRELERQGFEVTYMDVEENGLLDLQKLADTMRDDTVLVSIMHVNNELGVIQDIATIGEMCRERKIMFHVDAAQSAGKVLIDVQQLKVDFMSFSGHKVYGPKGVGALYVRRKPRARLEAQMHGGGHERGMRSGTLATHQLVGMGTAFRVAKQDFEKDHAHISALRKRLIDGIMSDMEEVYFNGTQDQSVPGIVNISFNFVEGESLLMAVKDIAVSSGSACTSASLEPSYVLRALGRNDELAHSSIRFSIGRFTTEEEIDYTVELMKNSIGRLREMSPLWEMHQEGIDLDSVEWAHH</sequence>
<accession>Q3IFI3</accession>
<feature type="chain" id="PRO_1000019426" description="Cysteine desulfurase IscS">
    <location>
        <begin position="1"/>
        <end position="405"/>
    </location>
</feature>
<feature type="active site" description="Cysteine persulfide intermediate" evidence="1">
    <location>
        <position position="329"/>
    </location>
</feature>
<feature type="binding site" evidence="1">
    <location>
        <begin position="75"/>
        <end position="76"/>
    </location>
    <ligand>
        <name>pyridoxal 5'-phosphate</name>
        <dbReference type="ChEBI" id="CHEBI:597326"/>
    </ligand>
</feature>
<feature type="binding site" evidence="1">
    <location>
        <position position="155"/>
    </location>
    <ligand>
        <name>pyridoxal 5'-phosphate</name>
        <dbReference type="ChEBI" id="CHEBI:597326"/>
    </ligand>
</feature>
<feature type="binding site" evidence="1">
    <location>
        <position position="183"/>
    </location>
    <ligand>
        <name>pyridoxal 5'-phosphate</name>
        <dbReference type="ChEBI" id="CHEBI:597326"/>
    </ligand>
</feature>
<feature type="binding site" evidence="1">
    <location>
        <begin position="203"/>
        <end position="205"/>
    </location>
    <ligand>
        <name>pyridoxal 5'-phosphate</name>
        <dbReference type="ChEBI" id="CHEBI:597326"/>
    </ligand>
</feature>
<feature type="binding site" evidence="1">
    <location>
        <position position="243"/>
    </location>
    <ligand>
        <name>pyridoxal 5'-phosphate</name>
        <dbReference type="ChEBI" id="CHEBI:597326"/>
    </ligand>
</feature>
<feature type="binding site" description="via persulfide group" evidence="1">
    <location>
        <position position="329"/>
    </location>
    <ligand>
        <name>[2Fe-2S] cluster</name>
        <dbReference type="ChEBI" id="CHEBI:190135"/>
        <note>ligand shared with IscU</note>
    </ligand>
</feature>
<feature type="modified residue" description="N6-(pyridoxal phosphate)lysine" evidence="1">
    <location>
        <position position="206"/>
    </location>
</feature>
<name>ISCS_PSET1</name>
<evidence type="ECO:0000255" key="1">
    <source>
        <dbReference type="HAMAP-Rule" id="MF_00331"/>
    </source>
</evidence>
<organism>
    <name type="scientific">Pseudoalteromonas translucida (strain TAC 125)</name>
    <dbReference type="NCBI Taxonomy" id="326442"/>
    <lineage>
        <taxon>Bacteria</taxon>
        <taxon>Pseudomonadati</taxon>
        <taxon>Pseudomonadota</taxon>
        <taxon>Gammaproteobacteria</taxon>
        <taxon>Alteromonadales</taxon>
        <taxon>Pseudoalteromonadaceae</taxon>
        <taxon>Pseudoalteromonas</taxon>
    </lineage>
</organism>
<protein>
    <recommendedName>
        <fullName evidence="1">Cysteine desulfurase IscS</fullName>
        <ecNumber evidence="1">2.8.1.7</ecNumber>
    </recommendedName>
</protein>
<comment type="function">
    <text evidence="1">Master enzyme that delivers sulfur to a number of partners involved in Fe-S cluster assembly, tRNA modification or cofactor biosynthesis. Catalyzes the removal of elemental sulfur atoms from cysteine to produce alanine. Functions as a sulfur delivery protein for Fe-S cluster synthesis onto IscU, an Fe-S scaffold assembly protein, as well as other S acceptor proteins.</text>
</comment>
<comment type="catalytic activity">
    <reaction evidence="1">
        <text>(sulfur carrier)-H + L-cysteine = (sulfur carrier)-SH + L-alanine</text>
        <dbReference type="Rhea" id="RHEA:43892"/>
        <dbReference type="Rhea" id="RHEA-COMP:14737"/>
        <dbReference type="Rhea" id="RHEA-COMP:14739"/>
        <dbReference type="ChEBI" id="CHEBI:29917"/>
        <dbReference type="ChEBI" id="CHEBI:35235"/>
        <dbReference type="ChEBI" id="CHEBI:57972"/>
        <dbReference type="ChEBI" id="CHEBI:64428"/>
        <dbReference type="EC" id="2.8.1.7"/>
    </reaction>
</comment>
<comment type="cofactor">
    <cofactor evidence="1">
        <name>pyridoxal 5'-phosphate</name>
        <dbReference type="ChEBI" id="CHEBI:597326"/>
    </cofactor>
</comment>
<comment type="pathway">
    <text evidence="1">Cofactor biosynthesis; iron-sulfur cluster biosynthesis.</text>
</comment>
<comment type="subunit">
    <text evidence="1">Homodimer. Forms a heterotetramer with IscU, interacts with other sulfur acceptors.</text>
</comment>
<comment type="subcellular location">
    <subcellularLocation>
        <location evidence="1">Cytoplasm</location>
    </subcellularLocation>
</comment>
<comment type="similarity">
    <text evidence="1">Belongs to the class-V pyridoxal-phosphate-dependent aminotransferase family. NifS/IscS subfamily.</text>
</comment>
<gene>
    <name evidence="1" type="primary">iscS</name>
    <name type="ordered locus">PSHAa2671</name>
</gene>